<evidence type="ECO:0000255" key="1">
    <source>
        <dbReference type="HAMAP-Rule" id="MF_00156"/>
    </source>
</evidence>
<evidence type="ECO:0000256" key="2">
    <source>
        <dbReference type="SAM" id="MobiDB-lite"/>
    </source>
</evidence>
<organism>
    <name type="scientific">Paracidovorax citrulli (strain AAC00-1)</name>
    <name type="common">Acidovorax citrulli</name>
    <dbReference type="NCBI Taxonomy" id="397945"/>
    <lineage>
        <taxon>Bacteria</taxon>
        <taxon>Pseudomonadati</taxon>
        <taxon>Pseudomonadota</taxon>
        <taxon>Betaproteobacteria</taxon>
        <taxon>Burkholderiales</taxon>
        <taxon>Comamonadaceae</taxon>
        <taxon>Paracidovorax</taxon>
    </lineage>
</organism>
<gene>
    <name evidence="1" type="primary">panB</name>
    <name type="ordered locus">Aave_3852</name>
</gene>
<dbReference type="EC" id="2.1.2.11" evidence="1"/>
<dbReference type="EMBL" id="CP000512">
    <property type="protein sequence ID" value="ABM34397.1"/>
    <property type="molecule type" value="Genomic_DNA"/>
</dbReference>
<dbReference type="RefSeq" id="WP_011796884.1">
    <property type="nucleotide sequence ID" value="NC_008752.1"/>
</dbReference>
<dbReference type="SMR" id="A1TTV9"/>
<dbReference type="STRING" id="397945.Aave_3852"/>
<dbReference type="GeneID" id="79788860"/>
<dbReference type="KEGG" id="aav:Aave_3852"/>
<dbReference type="eggNOG" id="COG0413">
    <property type="taxonomic scope" value="Bacteria"/>
</dbReference>
<dbReference type="HOGENOM" id="CLU_036645_1_0_4"/>
<dbReference type="OrthoDB" id="9781789at2"/>
<dbReference type="UniPathway" id="UPA00028">
    <property type="reaction ID" value="UER00003"/>
</dbReference>
<dbReference type="Proteomes" id="UP000002596">
    <property type="component" value="Chromosome"/>
</dbReference>
<dbReference type="GO" id="GO:0005737">
    <property type="term" value="C:cytoplasm"/>
    <property type="evidence" value="ECO:0007669"/>
    <property type="project" value="UniProtKB-SubCell"/>
</dbReference>
<dbReference type="GO" id="GO:0003864">
    <property type="term" value="F:3-methyl-2-oxobutanoate hydroxymethyltransferase activity"/>
    <property type="evidence" value="ECO:0007669"/>
    <property type="project" value="UniProtKB-UniRule"/>
</dbReference>
<dbReference type="GO" id="GO:0000287">
    <property type="term" value="F:magnesium ion binding"/>
    <property type="evidence" value="ECO:0007669"/>
    <property type="project" value="TreeGrafter"/>
</dbReference>
<dbReference type="GO" id="GO:0015940">
    <property type="term" value="P:pantothenate biosynthetic process"/>
    <property type="evidence" value="ECO:0007669"/>
    <property type="project" value="UniProtKB-UniRule"/>
</dbReference>
<dbReference type="CDD" id="cd06557">
    <property type="entry name" value="KPHMT-like"/>
    <property type="match status" value="1"/>
</dbReference>
<dbReference type="FunFam" id="3.20.20.60:FF:000003">
    <property type="entry name" value="3-methyl-2-oxobutanoate hydroxymethyltransferase"/>
    <property type="match status" value="1"/>
</dbReference>
<dbReference type="Gene3D" id="3.20.20.60">
    <property type="entry name" value="Phosphoenolpyruvate-binding domains"/>
    <property type="match status" value="1"/>
</dbReference>
<dbReference type="HAMAP" id="MF_00156">
    <property type="entry name" value="PanB"/>
    <property type="match status" value="1"/>
</dbReference>
<dbReference type="InterPro" id="IPR003700">
    <property type="entry name" value="Pantoate_hydroxy_MeTrfase"/>
</dbReference>
<dbReference type="InterPro" id="IPR015813">
    <property type="entry name" value="Pyrv/PenolPyrv_kinase-like_dom"/>
</dbReference>
<dbReference type="InterPro" id="IPR040442">
    <property type="entry name" value="Pyrv_kinase-like_dom_sf"/>
</dbReference>
<dbReference type="NCBIfam" id="TIGR00222">
    <property type="entry name" value="panB"/>
    <property type="match status" value="1"/>
</dbReference>
<dbReference type="NCBIfam" id="NF001452">
    <property type="entry name" value="PRK00311.1"/>
    <property type="match status" value="1"/>
</dbReference>
<dbReference type="PANTHER" id="PTHR20881">
    <property type="entry name" value="3-METHYL-2-OXOBUTANOATE HYDROXYMETHYLTRANSFERASE"/>
    <property type="match status" value="1"/>
</dbReference>
<dbReference type="PANTHER" id="PTHR20881:SF0">
    <property type="entry name" value="3-METHYL-2-OXOBUTANOATE HYDROXYMETHYLTRANSFERASE"/>
    <property type="match status" value="1"/>
</dbReference>
<dbReference type="Pfam" id="PF02548">
    <property type="entry name" value="Pantoate_transf"/>
    <property type="match status" value="1"/>
</dbReference>
<dbReference type="PIRSF" id="PIRSF000388">
    <property type="entry name" value="Pantoate_hydroxy_MeTrfase"/>
    <property type="match status" value="1"/>
</dbReference>
<dbReference type="SUPFAM" id="SSF51621">
    <property type="entry name" value="Phosphoenolpyruvate/pyruvate domain"/>
    <property type="match status" value="1"/>
</dbReference>
<accession>A1TTV9</accession>
<sequence length="296" mass="30857">MTAPTPTPANAATPYGTLPPASPLPQRRPVSLPRLAQMREAGEKITMLTAYDATFAAVADAAGVECLLVGDSLGMVCQGLPSTVGVSLDTMAYHTASVARGLHRVQGTAWLIADLPYGSYAEGPEQAMRSACTLMQAGAHMVKLEGGGWTAPTVRFLVERGVPVCAHLGLTPQTVHALGGYRVQGRSDEAARALRSQANELQDAGAAMLVLEMVPATLAREVTDALPRCHTIGIGAGSGTAGQVLVLHDMLGVNLGKNPKFAHDFMAQAGSVRGAIEAYVQAVKAGRFPDDALHAW</sequence>
<keyword id="KW-0963">Cytoplasm</keyword>
<keyword id="KW-0460">Magnesium</keyword>
<keyword id="KW-0479">Metal-binding</keyword>
<keyword id="KW-0566">Pantothenate biosynthesis</keyword>
<keyword id="KW-0808">Transferase</keyword>
<feature type="chain" id="PRO_0000297206" description="3-methyl-2-oxobutanoate hydroxymethyltransferase">
    <location>
        <begin position="1"/>
        <end position="296"/>
    </location>
</feature>
<feature type="region of interest" description="Disordered" evidence="2">
    <location>
        <begin position="1"/>
        <end position="29"/>
    </location>
</feature>
<feature type="compositionally biased region" description="Low complexity" evidence="2">
    <location>
        <begin position="1"/>
        <end position="14"/>
    </location>
</feature>
<feature type="active site" description="Proton acceptor" evidence="1">
    <location>
        <position position="212"/>
    </location>
</feature>
<feature type="binding site" evidence="1">
    <location>
        <begin position="71"/>
        <end position="72"/>
    </location>
    <ligand>
        <name>3-methyl-2-oxobutanoate</name>
        <dbReference type="ChEBI" id="CHEBI:11851"/>
    </ligand>
</feature>
<feature type="binding site" evidence="1">
    <location>
        <position position="71"/>
    </location>
    <ligand>
        <name>Mg(2+)</name>
        <dbReference type="ChEBI" id="CHEBI:18420"/>
    </ligand>
</feature>
<feature type="binding site" evidence="1">
    <location>
        <position position="114"/>
    </location>
    <ligand>
        <name>3-methyl-2-oxobutanoate</name>
        <dbReference type="ChEBI" id="CHEBI:11851"/>
    </ligand>
</feature>
<feature type="binding site" evidence="1">
    <location>
        <position position="114"/>
    </location>
    <ligand>
        <name>Mg(2+)</name>
        <dbReference type="ChEBI" id="CHEBI:18420"/>
    </ligand>
</feature>
<feature type="binding site" evidence="1">
    <location>
        <position position="143"/>
    </location>
    <ligand>
        <name>3-methyl-2-oxobutanoate</name>
        <dbReference type="ChEBI" id="CHEBI:11851"/>
    </ligand>
</feature>
<feature type="binding site" evidence="1">
    <location>
        <position position="145"/>
    </location>
    <ligand>
        <name>Mg(2+)</name>
        <dbReference type="ChEBI" id="CHEBI:18420"/>
    </ligand>
</feature>
<reference key="1">
    <citation type="submission" date="2006-12" db="EMBL/GenBank/DDBJ databases">
        <title>Complete sequence of Acidovorax avenae subsp. citrulli AAC00-1.</title>
        <authorList>
            <person name="Copeland A."/>
            <person name="Lucas S."/>
            <person name="Lapidus A."/>
            <person name="Barry K."/>
            <person name="Detter J.C."/>
            <person name="Glavina del Rio T."/>
            <person name="Dalin E."/>
            <person name="Tice H."/>
            <person name="Pitluck S."/>
            <person name="Kiss H."/>
            <person name="Brettin T."/>
            <person name="Bruce D."/>
            <person name="Han C."/>
            <person name="Tapia R."/>
            <person name="Gilna P."/>
            <person name="Schmutz J."/>
            <person name="Larimer F."/>
            <person name="Land M."/>
            <person name="Hauser L."/>
            <person name="Kyrpides N."/>
            <person name="Kim E."/>
            <person name="Stahl D."/>
            <person name="Richardson P."/>
        </authorList>
    </citation>
    <scope>NUCLEOTIDE SEQUENCE [LARGE SCALE GENOMIC DNA]</scope>
    <source>
        <strain>AAC00-1</strain>
    </source>
</reference>
<proteinExistence type="inferred from homology"/>
<protein>
    <recommendedName>
        <fullName evidence="1">3-methyl-2-oxobutanoate hydroxymethyltransferase</fullName>
        <ecNumber evidence="1">2.1.2.11</ecNumber>
    </recommendedName>
    <alternativeName>
        <fullName evidence="1">Ketopantoate hydroxymethyltransferase</fullName>
        <shortName evidence="1">KPHMT</shortName>
    </alternativeName>
</protein>
<name>PANB_PARC0</name>
<comment type="function">
    <text evidence="1">Catalyzes the reversible reaction in which hydroxymethyl group from 5,10-methylenetetrahydrofolate is transferred onto alpha-ketoisovalerate to form ketopantoate.</text>
</comment>
<comment type="catalytic activity">
    <reaction evidence="1">
        <text>3-methyl-2-oxobutanoate + (6R)-5,10-methylene-5,6,7,8-tetrahydrofolate + H2O = 2-dehydropantoate + (6S)-5,6,7,8-tetrahydrofolate</text>
        <dbReference type="Rhea" id="RHEA:11824"/>
        <dbReference type="ChEBI" id="CHEBI:11561"/>
        <dbReference type="ChEBI" id="CHEBI:11851"/>
        <dbReference type="ChEBI" id="CHEBI:15377"/>
        <dbReference type="ChEBI" id="CHEBI:15636"/>
        <dbReference type="ChEBI" id="CHEBI:57453"/>
        <dbReference type="EC" id="2.1.2.11"/>
    </reaction>
</comment>
<comment type="cofactor">
    <cofactor evidence="1">
        <name>Mg(2+)</name>
        <dbReference type="ChEBI" id="CHEBI:18420"/>
    </cofactor>
    <text evidence="1">Binds 1 Mg(2+) ion per subunit.</text>
</comment>
<comment type="pathway">
    <text evidence="1">Cofactor biosynthesis; (R)-pantothenate biosynthesis; (R)-pantoate from 3-methyl-2-oxobutanoate: step 1/2.</text>
</comment>
<comment type="subunit">
    <text evidence="1">Homodecamer; pentamer of dimers.</text>
</comment>
<comment type="subcellular location">
    <subcellularLocation>
        <location evidence="1">Cytoplasm</location>
    </subcellularLocation>
</comment>
<comment type="similarity">
    <text evidence="1">Belongs to the PanB family.</text>
</comment>